<sequence>MKLPIYLDYAATTPVDPRVAEKMFQYMTMDGIFGNPASRSHRYGWQAEEAVDVARNQVAELINADHREIVFTSGATESNNLAIKGVAHFYNKKGKHIITSKTEHKAVLDTCRQLEREGFEVTYLEPEANGIIPMERLEAAMRDDTILVSIMHVNNEIGVIHDVDAIGELCRSKGIIFHMDAAQSAGKLPIDVQTTKVDLISISGHKMYGPKGIGALYVRRKPRIRLEAQMHGGGHERGMRSGTLATHQIVGLGEAAAIAKAEMATDNARIAKLRDKLWNGIKHIEETYVNGDMTHRVSGSLNVSFNYVEGESLMMALKDLAVSSGSACTSASLEPSYVLRALGLNDEMAHSSIRFSIGRFTTEEEIDHAIETITQSIDKLREMSPLWEMFKDGIDLNQVQWAHH</sequence>
<proteinExistence type="inferred from homology"/>
<dbReference type="EC" id="2.8.1.7" evidence="1"/>
<dbReference type="EMBL" id="CP000446">
    <property type="protein sequence ID" value="ABI38813.1"/>
    <property type="molecule type" value="Genomic_DNA"/>
</dbReference>
<dbReference type="RefSeq" id="WP_011622512.1">
    <property type="nucleotide sequence ID" value="NC_008321.1"/>
</dbReference>
<dbReference type="SMR" id="Q0HJF4"/>
<dbReference type="KEGG" id="she:Shewmr4_1739"/>
<dbReference type="HOGENOM" id="CLU_003433_0_2_6"/>
<dbReference type="UniPathway" id="UPA00266"/>
<dbReference type="GO" id="GO:1990221">
    <property type="term" value="C:L-cysteine desulfurase complex"/>
    <property type="evidence" value="ECO:0007669"/>
    <property type="project" value="UniProtKB-ARBA"/>
</dbReference>
<dbReference type="GO" id="GO:0051537">
    <property type="term" value="F:2 iron, 2 sulfur cluster binding"/>
    <property type="evidence" value="ECO:0007669"/>
    <property type="project" value="UniProtKB-UniRule"/>
</dbReference>
<dbReference type="GO" id="GO:0031071">
    <property type="term" value="F:cysteine desulfurase activity"/>
    <property type="evidence" value="ECO:0007669"/>
    <property type="project" value="UniProtKB-UniRule"/>
</dbReference>
<dbReference type="GO" id="GO:0046872">
    <property type="term" value="F:metal ion binding"/>
    <property type="evidence" value="ECO:0007669"/>
    <property type="project" value="UniProtKB-KW"/>
</dbReference>
<dbReference type="GO" id="GO:0030170">
    <property type="term" value="F:pyridoxal phosphate binding"/>
    <property type="evidence" value="ECO:0007669"/>
    <property type="project" value="UniProtKB-UniRule"/>
</dbReference>
<dbReference type="GO" id="GO:0044571">
    <property type="term" value="P:[2Fe-2S] cluster assembly"/>
    <property type="evidence" value="ECO:0007669"/>
    <property type="project" value="UniProtKB-UniRule"/>
</dbReference>
<dbReference type="FunFam" id="3.40.640.10:FF:000003">
    <property type="entry name" value="Cysteine desulfurase IscS"/>
    <property type="match status" value="1"/>
</dbReference>
<dbReference type="FunFam" id="3.90.1150.10:FF:000002">
    <property type="entry name" value="Cysteine desulfurase IscS"/>
    <property type="match status" value="1"/>
</dbReference>
<dbReference type="Gene3D" id="3.90.1150.10">
    <property type="entry name" value="Aspartate Aminotransferase, domain 1"/>
    <property type="match status" value="1"/>
</dbReference>
<dbReference type="Gene3D" id="3.40.640.10">
    <property type="entry name" value="Type I PLP-dependent aspartate aminotransferase-like (Major domain)"/>
    <property type="match status" value="1"/>
</dbReference>
<dbReference type="HAMAP" id="MF_00331">
    <property type="entry name" value="Cys_desulf_IscS"/>
    <property type="match status" value="1"/>
</dbReference>
<dbReference type="InterPro" id="IPR000192">
    <property type="entry name" value="Aminotrans_V_dom"/>
</dbReference>
<dbReference type="InterPro" id="IPR020578">
    <property type="entry name" value="Aminotrans_V_PyrdxlP_BS"/>
</dbReference>
<dbReference type="InterPro" id="IPR010240">
    <property type="entry name" value="Cys_deSase_IscS"/>
</dbReference>
<dbReference type="InterPro" id="IPR016454">
    <property type="entry name" value="Cysteine_dSase"/>
</dbReference>
<dbReference type="InterPro" id="IPR015424">
    <property type="entry name" value="PyrdxlP-dep_Trfase"/>
</dbReference>
<dbReference type="InterPro" id="IPR015421">
    <property type="entry name" value="PyrdxlP-dep_Trfase_major"/>
</dbReference>
<dbReference type="InterPro" id="IPR015422">
    <property type="entry name" value="PyrdxlP-dep_Trfase_small"/>
</dbReference>
<dbReference type="NCBIfam" id="TIGR02006">
    <property type="entry name" value="IscS"/>
    <property type="match status" value="1"/>
</dbReference>
<dbReference type="NCBIfam" id="NF002806">
    <property type="entry name" value="PRK02948.1"/>
    <property type="match status" value="1"/>
</dbReference>
<dbReference type="NCBIfam" id="NF010611">
    <property type="entry name" value="PRK14012.1"/>
    <property type="match status" value="1"/>
</dbReference>
<dbReference type="PANTHER" id="PTHR11601:SF34">
    <property type="entry name" value="CYSTEINE DESULFURASE"/>
    <property type="match status" value="1"/>
</dbReference>
<dbReference type="PANTHER" id="PTHR11601">
    <property type="entry name" value="CYSTEINE DESULFURYLASE FAMILY MEMBER"/>
    <property type="match status" value="1"/>
</dbReference>
<dbReference type="Pfam" id="PF00266">
    <property type="entry name" value="Aminotran_5"/>
    <property type="match status" value="1"/>
</dbReference>
<dbReference type="PIRSF" id="PIRSF005572">
    <property type="entry name" value="NifS"/>
    <property type="match status" value="1"/>
</dbReference>
<dbReference type="SUPFAM" id="SSF53383">
    <property type="entry name" value="PLP-dependent transferases"/>
    <property type="match status" value="1"/>
</dbReference>
<dbReference type="PROSITE" id="PS00595">
    <property type="entry name" value="AA_TRANSFER_CLASS_5"/>
    <property type="match status" value="1"/>
</dbReference>
<comment type="function">
    <text evidence="1">Master enzyme that delivers sulfur to a number of partners involved in Fe-S cluster assembly, tRNA modification or cofactor biosynthesis. Catalyzes the removal of elemental sulfur atoms from cysteine to produce alanine. Functions as a sulfur delivery protein for Fe-S cluster synthesis onto IscU, an Fe-S scaffold assembly protein, as well as other S acceptor proteins.</text>
</comment>
<comment type="catalytic activity">
    <reaction evidence="1">
        <text>(sulfur carrier)-H + L-cysteine = (sulfur carrier)-SH + L-alanine</text>
        <dbReference type="Rhea" id="RHEA:43892"/>
        <dbReference type="Rhea" id="RHEA-COMP:14737"/>
        <dbReference type="Rhea" id="RHEA-COMP:14739"/>
        <dbReference type="ChEBI" id="CHEBI:29917"/>
        <dbReference type="ChEBI" id="CHEBI:35235"/>
        <dbReference type="ChEBI" id="CHEBI:57972"/>
        <dbReference type="ChEBI" id="CHEBI:64428"/>
        <dbReference type="EC" id="2.8.1.7"/>
    </reaction>
</comment>
<comment type="cofactor">
    <cofactor evidence="1">
        <name>pyridoxal 5'-phosphate</name>
        <dbReference type="ChEBI" id="CHEBI:597326"/>
    </cofactor>
</comment>
<comment type="pathway">
    <text evidence="1">Cofactor biosynthesis; iron-sulfur cluster biosynthesis.</text>
</comment>
<comment type="subunit">
    <text evidence="1">Homodimer. Forms a heterotetramer with IscU, interacts with other sulfur acceptors.</text>
</comment>
<comment type="subcellular location">
    <subcellularLocation>
        <location evidence="1">Cytoplasm</location>
    </subcellularLocation>
</comment>
<comment type="similarity">
    <text evidence="1">Belongs to the class-V pyridoxal-phosphate-dependent aminotransferase family. NifS/IscS subfamily.</text>
</comment>
<protein>
    <recommendedName>
        <fullName evidence="1">Cysteine desulfurase IscS</fullName>
        <ecNumber evidence="1">2.8.1.7</ecNumber>
    </recommendedName>
</protein>
<evidence type="ECO:0000255" key="1">
    <source>
        <dbReference type="HAMAP-Rule" id="MF_00331"/>
    </source>
</evidence>
<reference key="1">
    <citation type="submission" date="2006-08" db="EMBL/GenBank/DDBJ databases">
        <title>Complete sequence of Shewanella sp. MR-4.</title>
        <authorList>
            <consortium name="US DOE Joint Genome Institute"/>
            <person name="Copeland A."/>
            <person name="Lucas S."/>
            <person name="Lapidus A."/>
            <person name="Barry K."/>
            <person name="Detter J.C."/>
            <person name="Glavina del Rio T."/>
            <person name="Hammon N."/>
            <person name="Israni S."/>
            <person name="Dalin E."/>
            <person name="Tice H."/>
            <person name="Pitluck S."/>
            <person name="Kiss H."/>
            <person name="Brettin T."/>
            <person name="Bruce D."/>
            <person name="Han C."/>
            <person name="Tapia R."/>
            <person name="Gilna P."/>
            <person name="Schmutz J."/>
            <person name="Larimer F."/>
            <person name="Land M."/>
            <person name="Hauser L."/>
            <person name="Kyrpides N."/>
            <person name="Mikhailova N."/>
            <person name="Nealson K."/>
            <person name="Konstantinidis K."/>
            <person name="Klappenbach J."/>
            <person name="Tiedje J."/>
            <person name="Richardson P."/>
        </authorList>
    </citation>
    <scope>NUCLEOTIDE SEQUENCE [LARGE SCALE GENOMIC DNA]</scope>
    <source>
        <strain>MR-4</strain>
    </source>
</reference>
<organism>
    <name type="scientific">Shewanella sp. (strain MR-4)</name>
    <dbReference type="NCBI Taxonomy" id="60480"/>
    <lineage>
        <taxon>Bacteria</taxon>
        <taxon>Pseudomonadati</taxon>
        <taxon>Pseudomonadota</taxon>
        <taxon>Gammaproteobacteria</taxon>
        <taxon>Alteromonadales</taxon>
        <taxon>Shewanellaceae</taxon>
        <taxon>Shewanella</taxon>
    </lineage>
</organism>
<keyword id="KW-0001">2Fe-2S</keyword>
<keyword id="KW-0963">Cytoplasm</keyword>
<keyword id="KW-0408">Iron</keyword>
<keyword id="KW-0411">Iron-sulfur</keyword>
<keyword id="KW-0479">Metal-binding</keyword>
<keyword id="KW-0663">Pyridoxal phosphate</keyword>
<keyword id="KW-0808">Transferase</keyword>
<feature type="chain" id="PRO_1000019449" description="Cysteine desulfurase IscS">
    <location>
        <begin position="1"/>
        <end position="404"/>
    </location>
</feature>
<feature type="active site" description="Cysteine persulfide intermediate" evidence="1">
    <location>
        <position position="328"/>
    </location>
</feature>
<feature type="binding site" evidence="1">
    <location>
        <begin position="75"/>
        <end position="76"/>
    </location>
    <ligand>
        <name>pyridoxal 5'-phosphate</name>
        <dbReference type="ChEBI" id="CHEBI:597326"/>
    </ligand>
</feature>
<feature type="binding site" evidence="1">
    <location>
        <position position="155"/>
    </location>
    <ligand>
        <name>pyridoxal 5'-phosphate</name>
        <dbReference type="ChEBI" id="CHEBI:597326"/>
    </ligand>
</feature>
<feature type="binding site" evidence="1">
    <location>
        <position position="183"/>
    </location>
    <ligand>
        <name>pyridoxal 5'-phosphate</name>
        <dbReference type="ChEBI" id="CHEBI:597326"/>
    </ligand>
</feature>
<feature type="binding site" evidence="1">
    <location>
        <begin position="203"/>
        <end position="205"/>
    </location>
    <ligand>
        <name>pyridoxal 5'-phosphate</name>
        <dbReference type="ChEBI" id="CHEBI:597326"/>
    </ligand>
</feature>
<feature type="binding site" evidence="1">
    <location>
        <position position="243"/>
    </location>
    <ligand>
        <name>pyridoxal 5'-phosphate</name>
        <dbReference type="ChEBI" id="CHEBI:597326"/>
    </ligand>
</feature>
<feature type="binding site" description="via persulfide group" evidence="1">
    <location>
        <position position="328"/>
    </location>
    <ligand>
        <name>[2Fe-2S] cluster</name>
        <dbReference type="ChEBI" id="CHEBI:190135"/>
        <note>ligand shared with IscU</note>
    </ligand>
</feature>
<feature type="modified residue" description="N6-(pyridoxal phosphate)lysine" evidence="1">
    <location>
        <position position="206"/>
    </location>
</feature>
<name>ISCS_SHESM</name>
<accession>Q0HJF4</accession>
<gene>
    <name evidence="1" type="primary">iscS</name>
    <name type="ordered locus">Shewmr4_1739</name>
</gene>